<evidence type="ECO:0000255" key="1">
    <source>
        <dbReference type="HAMAP-Rule" id="MF_01394"/>
    </source>
</evidence>
<gene>
    <name evidence="1" type="primary">nuoA</name>
    <name type="ordered locus">BMA10247_0413</name>
</gene>
<organism>
    <name type="scientific">Burkholderia mallei (strain NCTC 10247)</name>
    <dbReference type="NCBI Taxonomy" id="320389"/>
    <lineage>
        <taxon>Bacteria</taxon>
        <taxon>Pseudomonadati</taxon>
        <taxon>Pseudomonadota</taxon>
        <taxon>Betaproteobacteria</taxon>
        <taxon>Burkholderiales</taxon>
        <taxon>Burkholderiaceae</taxon>
        <taxon>Burkholderia</taxon>
        <taxon>pseudomallei group</taxon>
    </lineage>
</organism>
<sequence>MNLAAYYPVLLFLLVGTGLGIALVSIGKILGPNKPDSEKNAPYECGFEAFEDARMKFDVRYYLVAILFIIFDLETAFLFPWGVALREIGWPGFIAMMIFLLEFLLGFAYIWKKGGLDWE</sequence>
<protein>
    <recommendedName>
        <fullName evidence="1">NADH-quinone oxidoreductase subunit A</fullName>
        <ecNumber evidence="1">7.1.1.-</ecNumber>
    </recommendedName>
    <alternativeName>
        <fullName evidence="1">NADH dehydrogenase I subunit A</fullName>
    </alternativeName>
    <alternativeName>
        <fullName evidence="1">NDH-1 subunit A</fullName>
    </alternativeName>
    <alternativeName>
        <fullName evidence="1">NUO1</fullName>
    </alternativeName>
</protein>
<name>NUOA_BURM7</name>
<accession>A3MIA1</accession>
<dbReference type="EC" id="7.1.1.-" evidence="1"/>
<dbReference type="EMBL" id="CP000548">
    <property type="protein sequence ID" value="ABO04119.1"/>
    <property type="molecule type" value="Genomic_DNA"/>
</dbReference>
<dbReference type="RefSeq" id="WP_004186624.1">
    <property type="nucleotide sequence ID" value="NZ_CP007802.1"/>
</dbReference>
<dbReference type="SMR" id="A3MIA1"/>
<dbReference type="KEGG" id="bmaz:BM44_2598"/>
<dbReference type="KEGG" id="bmn:BMA10247_0413"/>
<dbReference type="PATRIC" id="fig|320389.8.peg.2932"/>
<dbReference type="GO" id="GO:0030964">
    <property type="term" value="C:NADH dehydrogenase complex"/>
    <property type="evidence" value="ECO:0007669"/>
    <property type="project" value="TreeGrafter"/>
</dbReference>
<dbReference type="GO" id="GO:0005886">
    <property type="term" value="C:plasma membrane"/>
    <property type="evidence" value="ECO:0007669"/>
    <property type="project" value="UniProtKB-SubCell"/>
</dbReference>
<dbReference type="GO" id="GO:0008137">
    <property type="term" value="F:NADH dehydrogenase (ubiquinone) activity"/>
    <property type="evidence" value="ECO:0007669"/>
    <property type="project" value="InterPro"/>
</dbReference>
<dbReference type="GO" id="GO:0050136">
    <property type="term" value="F:NADH:ubiquinone reductase (non-electrogenic) activity"/>
    <property type="evidence" value="ECO:0007669"/>
    <property type="project" value="UniProtKB-UniRule"/>
</dbReference>
<dbReference type="GO" id="GO:0048038">
    <property type="term" value="F:quinone binding"/>
    <property type="evidence" value="ECO:0007669"/>
    <property type="project" value="UniProtKB-KW"/>
</dbReference>
<dbReference type="FunFam" id="1.20.58.1610:FF:000004">
    <property type="entry name" value="NADH-quinone oxidoreductase subunit A"/>
    <property type="match status" value="1"/>
</dbReference>
<dbReference type="Gene3D" id="1.20.58.1610">
    <property type="entry name" value="NADH:ubiquinone/plastoquinone oxidoreductase, chain 3"/>
    <property type="match status" value="1"/>
</dbReference>
<dbReference type="HAMAP" id="MF_01394">
    <property type="entry name" value="NDH1_NuoA"/>
    <property type="match status" value="1"/>
</dbReference>
<dbReference type="InterPro" id="IPR023043">
    <property type="entry name" value="NAD(P)H_OxRDtase_bac/plastid"/>
</dbReference>
<dbReference type="InterPro" id="IPR000440">
    <property type="entry name" value="NADH_UbQ/plastoQ_OxRdtase_su3"/>
</dbReference>
<dbReference type="InterPro" id="IPR038430">
    <property type="entry name" value="NDAH_ubi_oxred_su3_sf"/>
</dbReference>
<dbReference type="PANTHER" id="PTHR11058">
    <property type="entry name" value="NADH-UBIQUINONE OXIDOREDUCTASE CHAIN 3"/>
    <property type="match status" value="1"/>
</dbReference>
<dbReference type="PANTHER" id="PTHR11058:SF9">
    <property type="entry name" value="NADH-UBIQUINONE OXIDOREDUCTASE CHAIN 3"/>
    <property type="match status" value="1"/>
</dbReference>
<dbReference type="Pfam" id="PF00507">
    <property type="entry name" value="Oxidored_q4"/>
    <property type="match status" value="1"/>
</dbReference>
<proteinExistence type="inferred from homology"/>
<reference key="1">
    <citation type="journal article" date="2010" name="Genome Biol. Evol.">
        <title>Continuing evolution of Burkholderia mallei through genome reduction and large-scale rearrangements.</title>
        <authorList>
            <person name="Losada L."/>
            <person name="Ronning C.M."/>
            <person name="DeShazer D."/>
            <person name="Woods D."/>
            <person name="Fedorova N."/>
            <person name="Kim H.S."/>
            <person name="Shabalina S.A."/>
            <person name="Pearson T.R."/>
            <person name="Brinkac L."/>
            <person name="Tan P."/>
            <person name="Nandi T."/>
            <person name="Crabtree J."/>
            <person name="Badger J."/>
            <person name="Beckstrom-Sternberg S."/>
            <person name="Saqib M."/>
            <person name="Schutzer S.E."/>
            <person name="Keim P."/>
            <person name="Nierman W.C."/>
        </authorList>
    </citation>
    <scope>NUCLEOTIDE SEQUENCE [LARGE SCALE GENOMIC DNA]</scope>
    <source>
        <strain>NCTC 10247</strain>
    </source>
</reference>
<feature type="chain" id="PRO_0000362641" description="NADH-quinone oxidoreductase subunit A">
    <location>
        <begin position="1"/>
        <end position="119"/>
    </location>
</feature>
<feature type="transmembrane region" description="Helical" evidence="1">
    <location>
        <begin position="7"/>
        <end position="27"/>
    </location>
</feature>
<feature type="transmembrane region" description="Helical" evidence="1">
    <location>
        <begin position="63"/>
        <end position="83"/>
    </location>
</feature>
<feature type="transmembrane region" description="Helical" evidence="1">
    <location>
        <begin position="88"/>
        <end position="108"/>
    </location>
</feature>
<comment type="function">
    <text evidence="1">NDH-1 shuttles electrons from NADH, via FMN and iron-sulfur (Fe-S) centers, to quinones in the respiratory chain. The immediate electron acceptor for the enzyme in this species is believed to be ubiquinone. Couples the redox reaction to proton translocation (for every two electrons transferred, four hydrogen ions are translocated across the cytoplasmic membrane), and thus conserves the redox energy in a proton gradient.</text>
</comment>
<comment type="catalytic activity">
    <reaction evidence="1">
        <text>a quinone + NADH + 5 H(+)(in) = a quinol + NAD(+) + 4 H(+)(out)</text>
        <dbReference type="Rhea" id="RHEA:57888"/>
        <dbReference type="ChEBI" id="CHEBI:15378"/>
        <dbReference type="ChEBI" id="CHEBI:24646"/>
        <dbReference type="ChEBI" id="CHEBI:57540"/>
        <dbReference type="ChEBI" id="CHEBI:57945"/>
        <dbReference type="ChEBI" id="CHEBI:132124"/>
    </reaction>
</comment>
<comment type="subunit">
    <text evidence="1">NDH-1 is composed of 14 different subunits. Subunits NuoA, H, J, K, L, M, N constitute the membrane sector of the complex.</text>
</comment>
<comment type="subcellular location">
    <subcellularLocation>
        <location evidence="1">Cell inner membrane</location>
        <topology evidence="1">Multi-pass membrane protein</topology>
    </subcellularLocation>
</comment>
<comment type="similarity">
    <text evidence="1">Belongs to the complex I subunit 3 family.</text>
</comment>
<keyword id="KW-0997">Cell inner membrane</keyword>
<keyword id="KW-1003">Cell membrane</keyword>
<keyword id="KW-0472">Membrane</keyword>
<keyword id="KW-0520">NAD</keyword>
<keyword id="KW-0874">Quinone</keyword>
<keyword id="KW-1278">Translocase</keyword>
<keyword id="KW-0812">Transmembrane</keyword>
<keyword id="KW-1133">Transmembrane helix</keyword>
<keyword id="KW-0813">Transport</keyword>
<keyword id="KW-0830">Ubiquinone</keyword>